<accession>P65568</accession>
<accession>A0A1R3Y397</accession>
<accession>P95176</accession>
<accession>X2BN76</accession>
<reference key="1">
    <citation type="journal article" date="2003" name="Proc. Natl. Acad. Sci. U.S.A.">
        <title>The complete genome sequence of Mycobacterium bovis.</title>
        <authorList>
            <person name="Garnier T."/>
            <person name="Eiglmeier K."/>
            <person name="Camus J.-C."/>
            <person name="Medina N."/>
            <person name="Mansoor H."/>
            <person name="Pryor M."/>
            <person name="Duthoy S."/>
            <person name="Grondin S."/>
            <person name="Lacroix C."/>
            <person name="Monsempe C."/>
            <person name="Simon S."/>
            <person name="Harris B."/>
            <person name="Atkin R."/>
            <person name="Doggett J."/>
            <person name="Mayes R."/>
            <person name="Keating L."/>
            <person name="Wheeler P.R."/>
            <person name="Parkhill J."/>
            <person name="Barrell B.G."/>
            <person name="Cole S.T."/>
            <person name="Gordon S.V."/>
            <person name="Hewinson R.G."/>
        </authorList>
    </citation>
    <scope>NUCLEOTIDE SEQUENCE [LARGE SCALE GENOMIC DNA]</scope>
    <source>
        <strain>ATCC BAA-935 / AF2122/97</strain>
    </source>
</reference>
<reference key="2">
    <citation type="journal article" date="2017" name="Genome Announc.">
        <title>Updated reference genome sequence and annotation of Mycobacterium bovis AF2122/97.</title>
        <authorList>
            <person name="Malone K.M."/>
            <person name="Farrell D."/>
            <person name="Stuber T.P."/>
            <person name="Schubert O.T."/>
            <person name="Aebersold R."/>
            <person name="Robbe-Austerman S."/>
            <person name="Gordon S.V."/>
        </authorList>
    </citation>
    <scope>NUCLEOTIDE SEQUENCE [LARGE SCALE GENOMIC DNA]</scope>
    <scope>GENOME REANNOTATION</scope>
    <source>
        <strain>ATCC BAA-935 / AF2122/97</strain>
    </source>
</reference>
<sequence length="445" mass="48102">MTTQATPLTPVISRHWDDPESWTLATYQRHDRYRGYQALQKALTMPPDDVISIVKDSGLRGRGGAGFATGTKWSFIPQGDTGAAAKPHYLVVNADESEPGTCKDIPLMLATPHVLIEGVIIAAYAIRAHHAFVYVRGEVVPVLRRLHNAVAEAYAAGFLGRNIGGSGFDLELVVHAGAGAYICGEETALLDSLEGRRGQPRLRPPFPAVAGLYGCPTVINNVETIASVPSIILGGIDWFRSMGSEKSPGFTLYSLSGHVTRPGQYEAPLGITLRELLDYAGGVRAGHRLKFWTPGGSSTPLLTDEHLDVPLDYEGVGAAGSMLGTKALEIFDETTCVVRAVRRWTEFYKHESCGKCTPCREGTFWLDKIYERLETGRGSHEDIDKLLDISDSILGKSFCALGDGAASPVMSSIKHFRDEYLAHVEGGGCPFDPRDSMLVANGVDA</sequence>
<feature type="chain" id="PRO_0000118575" description="NADH-quinone oxidoreductase subunit F">
    <location>
        <begin position="1"/>
        <end position="445"/>
    </location>
</feature>
<feature type="binding site" evidence="1">
    <location>
        <begin position="61"/>
        <end position="70"/>
    </location>
    <ligand>
        <name>NAD(+)</name>
        <dbReference type="ChEBI" id="CHEBI:57540"/>
    </ligand>
</feature>
<feature type="binding site" evidence="1">
    <location>
        <begin position="177"/>
        <end position="224"/>
    </location>
    <ligand>
        <name>FMN</name>
        <dbReference type="ChEBI" id="CHEBI:58210"/>
    </ligand>
</feature>
<feature type="binding site" evidence="2">
    <location>
        <position position="353"/>
    </location>
    <ligand>
        <name>[4Fe-4S] cluster</name>
        <dbReference type="ChEBI" id="CHEBI:49883"/>
    </ligand>
</feature>
<feature type="binding site" evidence="2">
    <location>
        <position position="356"/>
    </location>
    <ligand>
        <name>[4Fe-4S] cluster</name>
        <dbReference type="ChEBI" id="CHEBI:49883"/>
    </ligand>
</feature>
<feature type="binding site" evidence="2">
    <location>
        <position position="359"/>
    </location>
    <ligand>
        <name>[4Fe-4S] cluster</name>
        <dbReference type="ChEBI" id="CHEBI:49883"/>
    </ligand>
</feature>
<feature type="binding site" evidence="2">
    <location>
        <position position="399"/>
    </location>
    <ligand>
        <name>[4Fe-4S] cluster</name>
        <dbReference type="ChEBI" id="CHEBI:49883"/>
    </ligand>
</feature>
<organism>
    <name type="scientific">Mycobacterium bovis (strain ATCC BAA-935 / AF2122/97)</name>
    <dbReference type="NCBI Taxonomy" id="233413"/>
    <lineage>
        <taxon>Bacteria</taxon>
        <taxon>Bacillati</taxon>
        <taxon>Actinomycetota</taxon>
        <taxon>Actinomycetes</taxon>
        <taxon>Mycobacteriales</taxon>
        <taxon>Mycobacteriaceae</taxon>
        <taxon>Mycobacterium</taxon>
        <taxon>Mycobacterium tuberculosis complex</taxon>
    </lineage>
</organism>
<keyword id="KW-0004">4Fe-4S</keyword>
<keyword id="KW-0285">Flavoprotein</keyword>
<keyword id="KW-0288">FMN</keyword>
<keyword id="KW-0408">Iron</keyword>
<keyword id="KW-0411">Iron-sulfur</keyword>
<keyword id="KW-0479">Metal-binding</keyword>
<keyword id="KW-0520">NAD</keyword>
<keyword id="KW-0874">Quinone</keyword>
<keyword id="KW-1185">Reference proteome</keyword>
<keyword id="KW-1278">Translocase</keyword>
<protein>
    <recommendedName>
        <fullName>NADH-quinone oxidoreductase subunit F</fullName>
        <ecNumber>7.1.1.-</ecNumber>
    </recommendedName>
    <alternativeName>
        <fullName>NADH dehydrogenase I subunit F</fullName>
    </alternativeName>
    <alternativeName>
        <fullName>NDH-1 subunit F</fullName>
    </alternativeName>
</protein>
<name>NUOF_MYCBO</name>
<comment type="function">
    <text evidence="1">NDH-1 shuttles electrons from NADH, via FMN and iron-sulfur (Fe-S) centers, to quinones in the respiratory chain. The immediate electron acceptor for the enzyme in this species is believed to be menaquinone. Couples the redox reaction to proton translocation (for every two electrons transferred, four hydrogen ions are translocated across the cytoplasmic membrane), and thus conserves the redox energy in a proton gradient (By similarity).</text>
</comment>
<comment type="catalytic activity">
    <reaction>
        <text>a quinone + NADH + 5 H(+)(in) = a quinol + NAD(+) + 4 H(+)(out)</text>
        <dbReference type="Rhea" id="RHEA:57888"/>
        <dbReference type="ChEBI" id="CHEBI:15378"/>
        <dbReference type="ChEBI" id="CHEBI:24646"/>
        <dbReference type="ChEBI" id="CHEBI:57540"/>
        <dbReference type="ChEBI" id="CHEBI:57945"/>
        <dbReference type="ChEBI" id="CHEBI:132124"/>
    </reaction>
</comment>
<comment type="cofactor">
    <cofactor evidence="3">
        <name>FMN</name>
        <dbReference type="ChEBI" id="CHEBI:58210"/>
    </cofactor>
    <text evidence="3">Binds 1 FMN.</text>
</comment>
<comment type="cofactor">
    <cofactor evidence="3">
        <name>[4Fe-4S] cluster</name>
        <dbReference type="ChEBI" id="CHEBI:49883"/>
    </cofactor>
    <text evidence="3">Binds 1 [4Fe-4S] cluster.</text>
</comment>
<comment type="similarity">
    <text evidence="3">Belongs to the complex I 51 kDa subunit family.</text>
</comment>
<dbReference type="EC" id="7.1.1.-"/>
<dbReference type="EMBL" id="LT708304">
    <property type="protein sequence ID" value="SIU01801.1"/>
    <property type="molecule type" value="Genomic_DNA"/>
</dbReference>
<dbReference type="RefSeq" id="NP_856819.1">
    <property type="nucleotide sequence ID" value="NC_002945.3"/>
</dbReference>
<dbReference type="RefSeq" id="WP_003416439.1">
    <property type="nucleotide sequence ID" value="NC_002945.4"/>
</dbReference>
<dbReference type="SMR" id="P65568"/>
<dbReference type="GeneID" id="45427137"/>
<dbReference type="KEGG" id="mbo:BQ2027_MB3174"/>
<dbReference type="PATRIC" id="fig|233413.5.peg.3492"/>
<dbReference type="Proteomes" id="UP000001419">
    <property type="component" value="Chromosome"/>
</dbReference>
<dbReference type="GO" id="GO:0051539">
    <property type="term" value="F:4 iron, 4 sulfur cluster binding"/>
    <property type="evidence" value="ECO:0007669"/>
    <property type="project" value="UniProtKB-KW"/>
</dbReference>
<dbReference type="GO" id="GO:0010181">
    <property type="term" value="F:FMN binding"/>
    <property type="evidence" value="ECO:0007669"/>
    <property type="project" value="InterPro"/>
</dbReference>
<dbReference type="GO" id="GO:0046872">
    <property type="term" value="F:metal ion binding"/>
    <property type="evidence" value="ECO:0007669"/>
    <property type="project" value="UniProtKB-KW"/>
</dbReference>
<dbReference type="GO" id="GO:0051287">
    <property type="term" value="F:NAD binding"/>
    <property type="evidence" value="ECO:0007669"/>
    <property type="project" value="InterPro"/>
</dbReference>
<dbReference type="GO" id="GO:0008137">
    <property type="term" value="F:NADH dehydrogenase (ubiquinone) activity"/>
    <property type="evidence" value="ECO:0007669"/>
    <property type="project" value="InterPro"/>
</dbReference>
<dbReference type="GO" id="GO:0048038">
    <property type="term" value="F:quinone binding"/>
    <property type="evidence" value="ECO:0007669"/>
    <property type="project" value="UniProtKB-KW"/>
</dbReference>
<dbReference type="GO" id="GO:0045333">
    <property type="term" value="P:cellular respiration"/>
    <property type="evidence" value="ECO:0007669"/>
    <property type="project" value="TreeGrafter"/>
</dbReference>
<dbReference type="FunFam" id="1.20.1440.230:FF:000001">
    <property type="entry name" value="Mitochondrial NADH dehydrogenase flavoprotein 1"/>
    <property type="match status" value="1"/>
</dbReference>
<dbReference type="FunFam" id="3.40.50.11540:FF:000001">
    <property type="entry name" value="NADH dehydrogenase [ubiquinone] flavoprotein 1, mitochondrial"/>
    <property type="match status" value="1"/>
</dbReference>
<dbReference type="FunFam" id="3.10.20.600:FF:000003">
    <property type="entry name" value="NADH-quinone oxidoreductase subunit F"/>
    <property type="match status" value="1"/>
</dbReference>
<dbReference type="Gene3D" id="3.10.20.600">
    <property type="match status" value="1"/>
</dbReference>
<dbReference type="Gene3D" id="6.10.250.1450">
    <property type="match status" value="1"/>
</dbReference>
<dbReference type="Gene3D" id="3.40.50.11540">
    <property type="entry name" value="NADH-ubiquinone oxidoreductase 51kDa subunit"/>
    <property type="match status" value="1"/>
</dbReference>
<dbReference type="Gene3D" id="1.20.1440.230">
    <property type="entry name" value="NADH-ubiquinone oxidoreductase 51kDa subunit, iron-sulphur binding domain"/>
    <property type="match status" value="1"/>
</dbReference>
<dbReference type="InterPro" id="IPR050837">
    <property type="entry name" value="ComplexI_51kDa_subunit"/>
</dbReference>
<dbReference type="InterPro" id="IPR001949">
    <property type="entry name" value="NADH-UbQ_OxRdtase_51kDa_CS"/>
</dbReference>
<dbReference type="InterPro" id="IPR011537">
    <property type="entry name" value="NADH-UbQ_OxRdtase_suF"/>
</dbReference>
<dbReference type="InterPro" id="IPR011538">
    <property type="entry name" value="Nuo51_FMN-bd"/>
</dbReference>
<dbReference type="InterPro" id="IPR037225">
    <property type="entry name" value="Nuo51_FMN-bd_sf"/>
</dbReference>
<dbReference type="InterPro" id="IPR019575">
    <property type="entry name" value="Nuop51_4Fe4S-bd"/>
</dbReference>
<dbReference type="InterPro" id="IPR037207">
    <property type="entry name" value="Nuop51_4Fe4S-bd_sf"/>
</dbReference>
<dbReference type="InterPro" id="IPR019554">
    <property type="entry name" value="Soluble_ligand-bd"/>
</dbReference>
<dbReference type="NCBIfam" id="TIGR01959">
    <property type="entry name" value="nuoF_fam"/>
    <property type="match status" value="1"/>
</dbReference>
<dbReference type="NCBIfam" id="NF010120">
    <property type="entry name" value="PRK13596.1"/>
    <property type="match status" value="1"/>
</dbReference>
<dbReference type="PANTHER" id="PTHR11780:SF10">
    <property type="entry name" value="NADH DEHYDROGENASE [UBIQUINONE] FLAVOPROTEIN 1, MITOCHONDRIAL"/>
    <property type="match status" value="1"/>
</dbReference>
<dbReference type="PANTHER" id="PTHR11780">
    <property type="entry name" value="NADH-UBIQUINONE OXIDOREDUCTASE FLAVOPROTEIN 1 NDUFV1"/>
    <property type="match status" value="1"/>
</dbReference>
<dbReference type="Pfam" id="PF01512">
    <property type="entry name" value="Complex1_51K"/>
    <property type="match status" value="1"/>
</dbReference>
<dbReference type="Pfam" id="PF10589">
    <property type="entry name" value="NADH_4Fe-4S"/>
    <property type="match status" value="1"/>
</dbReference>
<dbReference type="Pfam" id="PF10531">
    <property type="entry name" value="SLBB"/>
    <property type="match status" value="1"/>
</dbReference>
<dbReference type="SMART" id="SM00928">
    <property type="entry name" value="NADH_4Fe-4S"/>
    <property type="match status" value="1"/>
</dbReference>
<dbReference type="SUPFAM" id="SSF142019">
    <property type="entry name" value="Nqo1 FMN-binding domain-like"/>
    <property type="match status" value="1"/>
</dbReference>
<dbReference type="SUPFAM" id="SSF142984">
    <property type="entry name" value="Nqo1 middle domain-like"/>
    <property type="match status" value="1"/>
</dbReference>
<dbReference type="SUPFAM" id="SSF140490">
    <property type="entry name" value="Nqo1C-terminal domain-like"/>
    <property type="match status" value="1"/>
</dbReference>
<dbReference type="PROSITE" id="PS00644">
    <property type="entry name" value="COMPLEX1_51K_1"/>
    <property type="match status" value="1"/>
</dbReference>
<dbReference type="PROSITE" id="PS00645">
    <property type="entry name" value="COMPLEX1_51K_2"/>
    <property type="match status" value="1"/>
</dbReference>
<gene>
    <name type="primary">nuoF</name>
    <name type="ordered locus">BQ2027_MB3174</name>
</gene>
<proteinExistence type="inferred from homology"/>
<evidence type="ECO:0000250" key="1"/>
<evidence type="ECO:0000255" key="2"/>
<evidence type="ECO:0000305" key="3"/>